<accession>Q6LQ38</accession>
<organism>
    <name type="scientific">Photobacterium profundum (strain SS9)</name>
    <dbReference type="NCBI Taxonomy" id="298386"/>
    <lineage>
        <taxon>Bacteria</taxon>
        <taxon>Pseudomonadati</taxon>
        <taxon>Pseudomonadota</taxon>
        <taxon>Gammaproteobacteria</taxon>
        <taxon>Vibrionales</taxon>
        <taxon>Vibrionaceae</taxon>
        <taxon>Photobacterium</taxon>
    </lineage>
</organism>
<reference key="1">
    <citation type="journal article" date="2005" name="Science">
        <title>Life at depth: Photobacterium profundum genome sequence and expression analysis.</title>
        <authorList>
            <person name="Vezzi A."/>
            <person name="Campanaro S."/>
            <person name="D'Angelo M."/>
            <person name="Simonato F."/>
            <person name="Vitulo N."/>
            <person name="Lauro F.M."/>
            <person name="Cestaro A."/>
            <person name="Malacrida G."/>
            <person name="Simionati B."/>
            <person name="Cannata N."/>
            <person name="Romualdi C."/>
            <person name="Bartlett D.H."/>
            <person name="Valle G."/>
        </authorList>
    </citation>
    <scope>NUCLEOTIDE SEQUENCE [LARGE SCALE GENOMIC DNA]</scope>
    <source>
        <strain>ATCC BAA-1253 / SS9</strain>
    </source>
</reference>
<evidence type="ECO:0000255" key="1">
    <source>
        <dbReference type="PROSITE-ProRule" id="PRU00520"/>
    </source>
</evidence>
<evidence type="ECO:0000305" key="2"/>
<name>ACYP_PHOPR</name>
<feature type="chain" id="PRO_0000326768" description="Acylphosphatase">
    <location>
        <begin position="1"/>
        <end position="90"/>
    </location>
</feature>
<feature type="domain" description="Acylphosphatase-like" evidence="1">
    <location>
        <begin position="5"/>
        <end position="90"/>
    </location>
</feature>
<feature type="active site" evidence="1">
    <location>
        <position position="20"/>
    </location>
</feature>
<feature type="active site" evidence="1">
    <location>
        <position position="38"/>
    </location>
</feature>
<protein>
    <recommendedName>
        <fullName>Acylphosphatase</fullName>
        <ecNumber>3.6.1.7</ecNumber>
    </recommendedName>
    <alternativeName>
        <fullName>Acylphosphate phosphohydrolase</fullName>
    </alternativeName>
</protein>
<sequence>MSQICVKASVKGIVQGVGFRFHTAHEGLQGGLSGYAMNLPDGSVEVLACGSEANVNKLLAWLESGPKTSRVDNIDAEIIEWRHIDGFEIK</sequence>
<gene>
    <name type="primary">acyP</name>
    <name type="ordered locus">PBPRA2192</name>
</gene>
<comment type="catalytic activity">
    <reaction>
        <text>an acyl phosphate + H2O = a carboxylate + phosphate + H(+)</text>
        <dbReference type="Rhea" id="RHEA:14965"/>
        <dbReference type="ChEBI" id="CHEBI:15377"/>
        <dbReference type="ChEBI" id="CHEBI:15378"/>
        <dbReference type="ChEBI" id="CHEBI:29067"/>
        <dbReference type="ChEBI" id="CHEBI:43474"/>
        <dbReference type="ChEBI" id="CHEBI:59918"/>
        <dbReference type="EC" id="3.6.1.7"/>
    </reaction>
</comment>
<comment type="similarity">
    <text evidence="2">Belongs to the acylphosphatase family.</text>
</comment>
<proteinExistence type="inferred from homology"/>
<dbReference type="EC" id="3.6.1.7"/>
<dbReference type="EMBL" id="CR378670">
    <property type="protein sequence ID" value="CAG20588.1"/>
    <property type="molecule type" value="Genomic_DNA"/>
</dbReference>
<dbReference type="SMR" id="Q6LQ38"/>
<dbReference type="STRING" id="298386.PBPRA2192"/>
<dbReference type="KEGG" id="ppr:PBPRA2192"/>
<dbReference type="eggNOG" id="COG1254">
    <property type="taxonomic scope" value="Bacteria"/>
</dbReference>
<dbReference type="HOGENOM" id="CLU_141932_1_2_6"/>
<dbReference type="Proteomes" id="UP000000593">
    <property type="component" value="Chromosome 1"/>
</dbReference>
<dbReference type="GO" id="GO:0003998">
    <property type="term" value="F:acylphosphatase activity"/>
    <property type="evidence" value="ECO:0007669"/>
    <property type="project" value="UniProtKB-EC"/>
</dbReference>
<dbReference type="Gene3D" id="3.30.70.100">
    <property type="match status" value="1"/>
</dbReference>
<dbReference type="InterPro" id="IPR020456">
    <property type="entry name" value="Acylphosphatase"/>
</dbReference>
<dbReference type="InterPro" id="IPR001792">
    <property type="entry name" value="Acylphosphatase-like_dom"/>
</dbReference>
<dbReference type="InterPro" id="IPR036046">
    <property type="entry name" value="Acylphosphatase-like_dom_sf"/>
</dbReference>
<dbReference type="InterPro" id="IPR017968">
    <property type="entry name" value="Acylphosphatase_CS"/>
</dbReference>
<dbReference type="NCBIfam" id="NF011000">
    <property type="entry name" value="PRK14426.1"/>
    <property type="match status" value="1"/>
</dbReference>
<dbReference type="PANTHER" id="PTHR47268">
    <property type="entry name" value="ACYLPHOSPHATASE"/>
    <property type="match status" value="1"/>
</dbReference>
<dbReference type="PANTHER" id="PTHR47268:SF4">
    <property type="entry name" value="ACYLPHOSPHATASE"/>
    <property type="match status" value="1"/>
</dbReference>
<dbReference type="Pfam" id="PF00708">
    <property type="entry name" value="Acylphosphatase"/>
    <property type="match status" value="1"/>
</dbReference>
<dbReference type="SUPFAM" id="SSF54975">
    <property type="entry name" value="Acylphosphatase/BLUF domain-like"/>
    <property type="match status" value="1"/>
</dbReference>
<dbReference type="PROSITE" id="PS00150">
    <property type="entry name" value="ACYLPHOSPHATASE_1"/>
    <property type="match status" value="1"/>
</dbReference>
<dbReference type="PROSITE" id="PS00151">
    <property type="entry name" value="ACYLPHOSPHATASE_2"/>
    <property type="match status" value="1"/>
</dbReference>
<dbReference type="PROSITE" id="PS51160">
    <property type="entry name" value="ACYLPHOSPHATASE_3"/>
    <property type="match status" value="1"/>
</dbReference>
<keyword id="KW-0378">Hydrolase</keyword>
<keyword id="KW-1185">Reference proteome</keyword>